<accession>B8F6P7</accession>
<comment type="function">
    <text evidence="1">One of the primary rRNA binding proteins, it binds directly to 16S rRNA where it nucleates assembly of the body of the 30S subunit.</text>
</comment>
<comment type="function">
    <text evidence="1">With S5 and S12 plays an important role in translational accuracy.</text>
</comment>
<comment type="subunit">
    <text evidence="1">Part of the 30S ribosomal subunit. Contacts protein S5. The interaction surface between S4 and S5 is involved in control of translational fidelity.</text>
</comment>
<comment type="similarity">
    <text evidence="1">Belongs to the universal ribosomal protein uS4 family.</text>
</comment>
<proteinExistence type="inferred from homology"/>
<gene>
    <name evidence="1" type="primary">rpsD</name>
    <name type="ordered locus">HAPS_1430</name>
</gene>
<keyword id="KW-1185">Reference proteome</keyword>
<keyword id="KW-0687">Ribonucleoprotein</keyword>
<keyword id="KW-0689">Ribosomal protein</keyword>
<keyword id="KW-0694">RNA-binding</keyword>
<keyword id="KW-0699">rRNA-binding</keyword>
<reference key="1">
    <citation type="journal article" date="2009" name="J. Bacteriol.">
        <title>Complete genome sequence of Haemophilus parasuis SH0165.</title>
        <authorList>
            <person name="Yue M."/>
            <person name="Yang F."/>
            <person name="Yang J."/>
            <person name="Bei W."/>
            <person name="Cai X."/>
            <person name="Chen L."/>
            <person name="Dong J."/>
            <person name="Zhou R."/>
            <person name="Jin M."/>
            <person name="Jin Q."/>
            <person name="Chen H."/>
        </authorList>
    </citation>
    <scope>NUCLEOTIDE SEQUENCE [LARGE SCALE GENOMIC DNA]</scope>
    <source>
        <strain>SH0165</strain>
    </source>
</reference>
<organism>
    <name type="scientific">Glaesserella parasuis serovar 5 (strain SH0165)</name>
    <name type="common">Haemophilus parasuis</name>
    <dbReference type="NCBI Taxonomy" id="557723"/>
    <lineage>
        <taxon>Bacteria</taxon>
        <taxon>Pseudomonadati</taxon>
        <taxon>Pseudomonadota</taxon>
        <taxon>Gammaproteobacteria</taxon>
        <taxon>Pasteurellales</taxon>
        <taxon>Pasteurellaceae</taxon>
        <taxon>Glaesserella</taxon>
    </lineage>
</organism>
<protein>
    <recommendedName>
        <fullName evidence="1">Small ribosomal subunit protein uS4</fullName>
    </recommendedName>
    <alternativeName>
        <fullName evidence="2">30S ribosomal protein S4</fullName>
    </alternativeName>
</protein>
<dbReference type="EMBL" id="CP001321">
    <property type="protein sequence ID" value="ACL32999.1"/>
    <property type="molecule type" value="Genomic_DNA"/>
</dbReference>
<dbReference type="RefSeq" id="WP_005711975.1">
    <property type="nucleotide sequence ID" value="NC_011852.1"/>
</dbReference>
<dbReference type="SMR" id="B8F6P7"/>
<dbReference type="STRING" id="557723.HAPS_1430"/>
<dbReference type="GeneID" id="66617795"/>
<dbReference type="KEGG" id="hap:HAPS_1430"/>
<dbReference type="HOGENOM" id="CLU_092403_0_2_6"/>
<dbReference type="Proteomes" id="UP000006743">
    <property type="component" value="Chromosome"/>
</dbReference>
<dbReference type="GO" id="GO:0015935">
    <property type="term" value="C:small ribosomal subunit"/>
    <property type="evidence" value="ECO:0007669"/>
    <property type="project" value="InterPro"/>
</dbReference>
<dbReference type="GO" id="GO:0019843">
    <property type="term" value="F:rRNA binding"/>
    <property type="evidence" value="ECO:0007669"/>
    <property type="project" value="UniProtKB-UniRule"/>
</dbReference>
<dbReference type="GO" id="GO:0003735">
    <property type="term" value="F:structural constituent of ribosome"/>
    <property type="evidence" value="ECO:0007669"/>
    <property type="project" value="InterPro"/>
</dbReference>
<dbReference type="GO" id="GO:0042274">
    <property type="term" value="P:ribosomal small subunit biogenesis"/>
    <property type="evidence" value="ECO:0007669"/>
    <property type="project" value="TreeGrafter"/>
</dbReference>
<dbReference type="GO" id="GO:0006412">
    <property type="term" value="P:translation"/>
    <property type="evidence" value="ECO:0007669"/>
    <property type="project" value="UniProtKB-UniRule"/>
</dbReference>
<dbReference type="CDD" id="cd00165">
    <property type="entry name" value="S4"/>
    <property type="match status" value="1"/>
</dbReference>
<dbReference type="FunFam" id="1.10.1050.10:FF:000001">
    <property type="entry name" value="30S ribosomal protein S4"/>
    <property type="match status" value="1"/>
</dbReference>
<dbReference type="FunFam" id="3.10.290.10:FF:000001">
    <property type="entry name" value="30S ribosomal protein S4"/>
    <property type="match status" value="1"/>
</dbReference>
<dbReference type="Gene3D" id="1.10.1050.10">
    <property type="entry name" value="Ribosomal Protein S4 Delta 41, Chain A, domain 1"/>
    <property type="match status" value="1"/>
</dbReference>
<dbReference type="Gene3D" id="3.10.290.10">
    <property type="entry name" value="RNA-binding S4 domain"/>
    <property type="match status" value="1"/>
</dbReference>
<dbReference type="HAMAP" id="MF_01306_B">
    <property type="entry name" value="Ribosomal_uS4_B"/>
    <property type="match status" value="1"/>
</dbReference>
<dbReference type="InterPro" id="IPR022801">
    <property type="entry name" value="Ribosomal_uS4"/>
</dbReference>
<dbReference type="InterPro" id="IPR005709">
    <property type="entry name" value="Ribosomal_uS4_bac-type"/>
</dbReference>
<dbReference type="InterPro" id="IPR018079">
    <property type="entry name" value="Ribosomal_uS4_CS"/>
</dbReference>
<dbReference type="InterPro" id="IPR001912">
    <property type="entry name" value="Ribosomal_uS4_N"/>
</dbReference>
<dbReference type="InterPro" id="IPR002942">
    <property type="entry name" value="S4_RNA-bd"/>
</dbReference>
<dbReference type="InterPro" id="IPR036986">
    <property type="entry name" value="S4_RNA-bd_sf"/>
</dbReference>
<dbReference type="NCBIfam" id="NF003717">
    <property type="entry name" value="PRK05327.1"/>
    <property type="match status" value="1"/>
</dbReference>
<dbReference type="NCBIfam" id="TIGR01017">
    <property type="entry name" value="rpsD_bact"/>
    <property type="match status" value="1"/>
</dbReference>
<dbReference type="PANTHER" id="PTHR11831">
    <property type="entry name" value="30S 40S RIBOSOMAL PROTEIN"/>
    <property type="match status" value="1"/>
</dbReference>
<dbReference type="PANTHER" id="PTHR11831:SF4">
    <property type="entry name" value="SMALL RIBOSOMAL SUBUNIT PROTEIN US4M"/>
    <property type="match status" value="1"/>
</dbReference>
<dbReference type="Pfam" id="PF00163">
    <property type="entry name" value="Ribosomal_S4"/>
    <property type="match status" value="1"/>
</dbReference>
<dbReference type="Pfam" id="PF01479">
    <property type="entry name" value="S4"/>
    <property type="match status" value="1"/>
</dbReference>
<dbReference type="SMART" id="SM01390">
    <property type="entry name" value="Ribosomal_S4"/>
    <property type="match status" value="1"/>
</dbReference>
<dbReference type="SMART" id="SM00363">
    <property type="entry name" value="S4"/>
    <property type="match status" value="1"/>
</dbReference>
<dbReference type="SUPFAM" id="SSF55174">
    <property type="entry name" value="Alpha-L RNA-binding motif"/>
    <property type="match status" value="1"/>
</dbReference>
<dbReference type="PROSITE" id="PS00632">
    <property type="entry name" value="RIBOSOMAL_S4"/>
    <property type="match status" value="1"/>
</dbReference>
<dbReference type="PROSITE" id="PS50889">
    <property type="entry name" value="S4"/>
    <property type="match status" value="1"/>
</dbReference>
<evidence type="ECO:0000255" key="1">
    <source>
        <dbReference type="HAMAP-Rule" id="MF_01306"/>
    </source>
</evidence>
<evidence type="ECO:0000305" key="2"/>
<sequence>MARYLGPKLKLSRREGTDLFLKSGVRAIESKCKIDTAPGQHGARKPRLSDYGSQLREKQKVRRIYGILERQFRNYYKEANRLKGNTGENLLVLLEGRLDNVVYRMGFAATRAEARQLVSHKSIVVNGRVVNIPSYQVSVDDVIAVREKSKKQARIKASLELATQREKPTWLEVDATKMEGVFKRTPERSDLSADINEHLIVELYSK</sequence>
<feature type="chain" id="PRO_1000165405" description="Small ribosomal subunit protein uS4">
    <location>
        <begin position="1"/>
        <end position="206"/>
    </location>
</feature>
<feature type="domain" description="S4 RNA-binding" evidence="1">
    <location>
        <begin position="96"/>
        <end position="156"/>
    </location>
</feature>
<name>RS4_GLAP5</name>